<protein>
    <recommendedName>
        <fullName evidence="1">UDP-N-acetylenolpyruvoylglucosamine reductase</fullName>
        <ecNumber evidence="1">1.3.1.98</ecNumber>
    </recommendedName>
    <alternativeName>
        <fullName evidence="1">UDP-N-acetylmuramate dehydrogenase</fullName>
    </alternativeName>
</protein>
<organism>
    <name type="scientific">Nitrosococcus oceani (strain ATCC 19707 / BCRC 17464 / JCM 30415 / NCIMB 11848 / C-107)</name>
    <dbReference type="NCBI Taxonomy" id="323261"/>
    <lineage>
        <taxon>Bacteria</taxon>
        <taxon>Pseudomonadati</taxon>
        <taxon>Pseudomonadota</taxon>
        <taxon>Gammaproteobacteria</taxon>
        <taxon>Chromatiales</taxon>
        <taxon>Chromatiaceae</taxon>
        <taxon>Nitrosococcus</taxon>
    </lineage>
</organism>
<keyword id="KW-0131">Cell cycle</keyword>
<keyword id="KW-0132">Cell division</keyword>
<keyword id="KW-0133">Cell shape</keyword>
<keyword id="KW-0961">Cell wall biogenesis/degradation</keyword>
<keyword id="KW-0963">Cytoplasm</keyword>
<keyword id="KW-0274">FAD</keyword>
<keyword id="KW-0285">Flavoprotein</keyword>
<keyword id="KW-0521">NADP</keyword>
<keyword id="KW-0560">Oxidoreductase</keyword>
<keyword id="KW-0573">Peptidoglycan synthesis</keyword>
<keyword id="KW-1185">Reference proteome</keyword>
<name>MURB_NITOC</name>
<reference key="1">
    <citation type="journal article" date="2006" name="Appl. Environ. Microbiol.">
        <title>Complete genome sequence of the marine, chemolithoautotrophic, ammonia-oxidizing bacterium Nitrosococcus oceani ATCC 19707.</title>
        <authorList>
            <person name="Klotz M.G."/>
            <person name="Arp D.J."/>
            <person name="Chain P.S.G."/>
            <person name="El-Sheikh A.F."/>
            <person name="Hauser L.J."/>
            <person name="Hommes N.G."/>
            <person name="Larimer F.W."/>
            <person name="Malfatti S.A."/>
            <person name="Norton J.M."/>
            <person name="Poret-Peterson A.T."/>
            <person name="Vergez L.M."/>
            <person name="Ward B.B."/>
        </authorList>
    </citation>
    <scope>NUCLEOTIDE SEQUENCE [LARGE SCALE GENOMIC DNA]</scope>
    <source>
        <strain>ATCC 19707 / BCRC 17464 / JCM 30415 / NCIMB 11848 / C-107</strain>
    </source>
</reference>
<proteinExistence type="inferred from homology"/>
<comment type="function">
    <text evidence="1">Cell wall formation.</text>
</comment>
<comment type="catalytic activity">
    <reaction evidence="1">
        <text>UDP-N-acetyl-alpha-D-muramate + NADP(+) = UDP-N-acetyl-3-O-(1-carboxyvinyl)-alpha-D-glucosamine + NADPH + H(+)</text>
        <dbReference type="Rhea" id="RHEA:12248"/>
        <dbReference type="ChEBI" id="CHEBI:15378"/>
        <dbReference type="ChEBI" id="CHEBI:57783"/>
        <dbReference type="ChEBI" id="CHEBI:58349"/>
        <dbReference type="ChEBI" id="CHEBI:68483"/>
        <dbReference type="ChEBI" id="CHEBI:70757"/>
        <dbReference type="EC" id="1.3.1.98"/>
    </reaction>
</comment>
<comment type="cofactor">
    <cofactor evidence="1">
        <name>FAD</name>
        <dbReference type="ChEBI" id="CHEBI:57692"/>
    </cofactor>
</comment>
<comment type="pathway">
    <text evidence="1">Cell wall biogenesis; peptidoglycan biosynthesis.</text>
</comment>
<comment type="subcellular location">
    <subcellularLocation>
        <location evidence="1">Cytoplasm</location>
    </subcellularLocation>
</comment>
<comment type="similarity">
    <text evidence="1">Belongs to the MurB family.</text>
</comment>
<dbReference type="EC" id="1.3.1.98" evidence="1"/>
<dbReference type="EMBL" id="CP000127">
    <property type="protein sequence ID" value="ABA59305.1"/>
    <property type="molecule type" value="Genomic_DNA"/>
</dbReference>
<dbReference type="RefSeq" id="WP_002812289.1">
    <property type="nucleotide sequence ID" value="NC_007484.1"/>
</dbReference>
<dbReference type="SMR" id="Q3J791"/>
<dbReference type="FunCoup" id="Q3J791">
    <property type="interactions" value="484"/>
</dbReference>
<dbReference type="STRING" id="323261.Noc_2859"/>
<dbReference type="KEGG" id="noc:Noc_2859"/>
<dbReference type="eggNOG" id="COG0812">
    <property type="taxonomic scope" value="Bacteria"/>
</dbReference>
<dbReference type="HOGENOM" id="CLU_035304_1_0_6"/>
<dbReference type="InParanoid" id="Q3J791"/>
<dbReference type="UniPathway" id="UPA00219"/>
<dbReference type="Proteomes" id="UP000006838">
    <property type="component" value="Chromosome"/>
</dbReference>
<dbReference type="GO" id="GO:0005829">
    <property type="term" value="C:cytosol"/>
    <property type="evidence" value="ECO:0007669"/>
    <property type="project" value="TreeGrafter"/>
</dbReference>
<dbReference type="GO" id="GO:0071949">
    <property type="term" value="F:FAD binding"/>
    <property type="evidence" value="ECO:0007669"/>
    <property type="project" value="InterPro"/>
</dbReference>
<dbReference type="GO" id="GO:0008762">
    <property type="term" value="F:UDP-N-acetylmuramate dehydrogenase activity"/>
    <property type="evidence" value="ECO:0007669"/>
    <property type="project" value="UniProtKB-UniRule"/>
</dbReference>
<dbReference type="GO" id="GO:0051301">
    <property type="term" value="P:cell division"/>
    <property type="evidence" value="ECO:0007669"/>
    <property type="project" value="UniProtKB-KW"/>
</dbReference>
<dbReference type="GO" id="GO:0071555">
    <property type="term" value="P:cell wall organization"/>
    <property type="evidence" value="ECO:0007669"/>
    <property type="project" value="UniProtKB-KW"/>
</dbReference>
<dbReference type="GO" id="GO:0009252">
    <property type="term" value="P:peptidoglycan biosynthetic process"/>
    <property type="evidence" value="ECO:0007669"/>
    <property type="project" value="UniProtKB-UniRule"/>
</dbReference>
<dbReference type="GO" id="GO:0008360">
    <property type="term" value="P:regulation of cell shape"/>
    <property type="evidence" value="ECO:0007669"/>
    <property type="project" value="UniProtKB-KW"/>
</dbReference>
<dbReference type="Gene3D" id="3.30.465.10">
    <property type="match status" value="1"/>
</dbReference>
<dbReference type="Gene3D" id="3.90.78.10">
    <property type="entry name" value="UDP-N-acetylenolpyruvoylglucosamine reductase, C-terminal domain"/>
    <property type="match status" value="1"/>
</dbReference>
<dbReference type="Gene3D" id="3.30.43.10">
    <property type="entry name" value="Uridine Diphospho-n-acetylenolpyruvylglucosamine Reductase, domain 2"/>
    <property type="match status" value="1"/>
</dbReference>
<dbReference type="HAMAP" id="MF_00037">
    <property type="entry name" value="MurB"/>
    <property type="match status" value="1"/>
</dbReference>
<dbReference type="InterPro" id="IPR016166">
    <property type="entry name" value="FAD-bd_PCMH"/>
</dbReference>
<dbReference type="InterPro" id="IPR036318">
    <property type="entry name" value="FAD-bd_PCMH-like_sf"/>
</dbReference>
<dbReference type="InterPro" id="IPR016167">
    <property type="entry name" value="FAD-bd_PCMH_sub1"/>
</dbReference>
<dbReference type="InterPro" id="IPR016169">
    <property type="entry name" value="FAD-bd_PCMH_sub2"/>
</dbReference>
<dbReference type="InterPro" id="IPR003170">
    <property type="entry name" value="MurB"/>
</dbReference>
<dbReference type="InterPro" id="IPR011601">
    <property type="entry name" value="MurB_C"/>
</dbReference>
<dbReference type="InterPro" id="IPR036635">
    <property type="entry name" value="MurB_C_sf"/>
</dbReference>
<dbReference type="InterPro" id="IPR006094">
    <property type="entry name" value="Oxid_FAD_bind_N"/>
</dbReference>
<dbReference type="NCBIfam" id="TIGR00179">
    <property type="entry name" value="murB"/>
    <property type="match status" value="1"/>
</dbReference>
<dbReference type="NCBIfam" id="NF010480">
    <property type="entry name" value="PRK13905.1"/>
    <property type="match status" value="1"/>
</dbReference>
<dbReference type="PANTHER" id="PTHR21071">
    <property type="entry name" value="UDP-N-ACETYLENOLPYRUVOYLGLUCOSAMINE REDUCTASE"/>
    <property type="match status" value="1"/>
</dbReference>
<dbReference type="PANTHER" id="PTHR21071:SF4">
    <property type="entry name" value="UDP-N-ACETYLENOLPYRUVOYLGLUCOSAMINE REDUCTASE"/>
    <property type="match status" value="1"/>
</dbReference>
<dbReference type="Pfam" id="PF01565">
    <property type="entry name" value="FAD_binding_4"/>
    <property type="match status" value="1"/>
</dbReference>
<dbReference type="Pfam" id="PF02873">
    <property type="entry name" value="MurB_C"/>
    <property type="match status" value="1"/>
</dbReference>
<dbReference type="SUPFAM" id="SSF56176">
    <property type="entry name" value="FAD-binding/transporter-associated domain-like"/>
    <property type="match status" value="1"/>
</dbReference>
<dbReference type="SUPFAM" id="SSF56194">
    <property type="entry name" value="Uridine diphospho-N-Acetylenolpyruvylglucosamine reductase, MurB, C-terminal domain"/>
    <property type="match status" value="1"/>
</dbReference>
<dbReference type="PROSITE" id="PS51387">
    <property type="entry name" value="FAD_PCMH"/>
    <property type="match status" value="1"/>
</dbReference>
<feature type="chain" id="PRO_0000224698" description="UDP-N-acetylenolpyruvoylglucosamine reductase">
    <location>
        <begin position="1"/>
        <end position="298"/>
    </location>
</feature>
<feature type="domain" description="FAD-binding PCMH-type" evidence="1">
    <location>
        <begin position="27"/>
        <end position="206"/>
    </location>
</feature>
<feature type="active site" evidence="1">
    <location>
        <position position="171"/>
    </location>
</feature>
<feature type="active site" description="Proton donor" evidence="1">
    <location>
        <position position="220"/>
    </location>
</feature>
<feature type="active site" evidence="1">
    <location>
        <position position="290"/>
    </location>
</feature>
<evidence type="ECO:0000255" key="1">
    <source>
        <dbReference type="HAMAP-Rule" id="MF_00037"/>
    </source>
</evidence>
<gene>
    <name evidence="1" type="primary">murB</name>
    <name type="ordered locus">Noc_2859</name>
</gene>
<accession>Q3J791</accession>
<sequence length="298" mass="32179">MGGISAASVRGWLRHHVVMASHTSWRVGGPAQRLYRPADRDDLIAFLRFLPRNEPLLWLGLGSNLLVRDGGISGTVIAIAGVLNRIERRTDTTVWVEAGVSCAKLAKFCAREGLRGAEFLAGIPGTVGGALAMNAGAFGGTMWELVTAVEVAGIGGEHCRRLPQEYQVSYREVHGPEREWFLAAELRLTLGNSQVAQQQIRRLLRQRNGCQPIRQPCAGSVFRNPWNDKAGRLIEACGLKGASIGGARVSERHANFIVNTGNASAADVEHLIQWVAETVARQAGVSLVPEVHMVGEPA</sequence>